<comment type="function">
    <text evidence="1">May function as a substrate receptor for CUL4-DDB1 E3 ubiquitin-protein ligase complex.</text>
</comment>
<comment type="pathway">
    <text>Protein modification; protein ubiquitination.</text>
</comment>
<comment type="similarity">
    <text evidence="3">Belongs to the WD repeat DCAF10 family.</text>
</comment>
<protein>
    <recommendedName>
        <fullName>DDB1- and CUL4-associated factor 10</fullName>
    </recommendedName>
    <alternativeName>
        <fullName>WD repeat-containing protein 32</fullName>
    </alternativeName>
</protein>
<accession>Q6NWH1</accession>
<organism>
    <name type="scientific">Danio rerio</name>
    <name type="common">Zebrafish</name>
    <name type="synonym">Brachydanio rerio</name>
    <dbReference type="NCBI Taxonomy" id="7955"/>
    <lineage>
        <taxon>Eukaryota</taxon>
        <taxon>Metazoa</taxon>
        <taxon>Chordata</taxon>
        <taxon>Craniata</taxon>
        <taxon>Vertebrata</taxon>
        <taxon>Euteleostomi</taxon>
        <taxon>Actinopterygii</taxon>
        <taxon>Neopterygii</taxon>
        <taxon>Teleostei</taxon>
        <taxon>Ostariophysi</taxon>
        <taxon>Cypriniformes</taxon>
        <taxon>Danionidae</taxon>
        <taxon>Danioninae</taxon>
        <taxon>Danio</taxon>
    </lineage>
</organism>
<evidence type="ECO:0000250" key="1"/>
<evidence type="ECO:0000256" key="2">
    <source>
        <dbReference type="SAM" id="MobiDB-lite"/>
    </source>
</evidence>
<evidence type="ECO:0000305" key="3"/>
<feature type="chain" id="PRO_0000306835" description="DDB1- and CUL4-associated factor 10">
    <location>
        <begin position="1"/>
        <end position="508"/>
    </location>
</feature>
<feature type="repeat" description="WD 1">
    <location>
        <begin position="126"/>
        <end position="165"/>
    </location>
</feature>
<feature type="repeat" description="WD 2">
    <location>
        <begin position="169"/>
        <end position="207"/>
    </location>
</feature>
<feature type="repeat" description="WD 3">
    <location>
        <begin position="211"/>
        <end position="250"/>
    </location>
</feature>
<feature type="repeat" description="WD 4">
    <location>
        <begin position="256"/>
        <end position="295"/>
    </location>
</feature>
<feature type="repeat" description="WD 5">
    <location>
        <begin position="356"/>
        <end position="396"/>
    </location>
</feature>
<feature type="repeat" description="WD 6">
    <location>
        <begin position="419"/>
        <end position="457"/>
    </location>
</feature>
<feature type="repeat" description="WD 7">
    <location>
        <begin position="475"/>
        <end position="508"/>
    </location>
</feature>
<feature type="region of interest" description="Disordered" evidence="2">
    <location>
        <begin position="1"/>
        <end position="75"/>
    </location>
</feature>
<feature type="region of interest" description="Disordered" evidence="2">
    <location>
        <begin position="307"/>
        <end position="343"/>
    </location>
</feature>
<feature type="compositionally biased region" description="Basic and acidic residues" evidence="2">
    <location>
        <begin position="7"/>
        <end position="17"/>
    </location>
</feature>
<feature type="compositionally biased region" description="Acidic residues" evidence="2">
    <location>
        <begin position="18"/>
        <end position="32"/>
    </location>
</feature>
<feature type="compositionally biased region" description="Gly residues" evidence="2">
    <location>
        <begin position="63"/>
        <end position="75"/>
    </location>
</feature>
<feature type="compositionally biased region" description="Basic and acidic residues" evidence="2">
    <location>
        <begin position="325"/>
        <end position="338"/>
    </location>
</feature>
<proteinExistence type="evidence at transcript level"/>
<sequence>MSSGHPSDNEEPRADLLREEEEEEEEEEDSDEDRGSTRPASPQATRECAGTQGSSRPEVTADGGTGSASGSGCRGSGACDSLFSWICRRKIRRGPYVDPARDHFRTMTRLYSSMSPAADSVNLSTQTHGAVFNLEYSPDGSVLTVACEQTEVLLFDPVSSRHIKTLVEAHEDCVNNIRFLDNRLFATCSDDTTIALWDLRKLNSKVCSLHGHASWVKNIEYDTHTRLLVTSGFDGNVITWDTNRFTEDGCPHKKFFHTRYLMRMRLTPDCSKMLISTSSGYLLILHDLDLTQSLEVGSYRILRARRPPLSTEGSSAGSRSGGPRHTIDNKNHPHREGLSPRNSLEVLTPEIPGERDRGNCITSLQLHPKGWATLLRCSSNMDDQEWTCVYEFQEGAPPRPPVSPRCSLRLTHYIEEANVGRGYIKELCFSPDGRLICSPYGYGVRLLAFDENCAELVDCMPVRTAQLREVRSIYSHSDVVLTSKFSPTHCQFASGCLSGRVALYQPHF</sequence>
<keyword id="KW-1185">Reference proteome</keyword>
<keyword id="KW-0677">Repeat</keyword>
<keyword id="KW-0833">Ubl conjugation pathway</keyword>
<keyword id="KW-0853">WD repeat</keyword>
<gene>
    <name type="primary">dcaf10</name>
    <name type="synonym">wdr32</name>
    <name type="ORF">zgc:85718</name>
</gene>
<dbReference type="EMBL" id="BC067591">
    <property type="protein sequence ID" value="AAH67591.2"/>
    <property type="molecule type" value="mRNA"/>
</dbReference>
<dbReference type="RefSeq" id="NP_998111.2">
    <property type="nucleotide sequence ID" value="NM_212946.1"/>
</dbReference>
<dbReference type="SMR" id="Q6NWH1"/>
<dbReference type="FunCoup" id="Q6NWH1">
    <property type="interactions" value="1709"/>
</dbReference>
<dbReference type="STRING" id="7955.ENSDARP00000047739"/>
<dbReference type="PaxDb" id="7955-ENSDARP00000047739"/>
<dbReference type="Ensembl" id="ENSDART00000047740">
    <property type="protein sequence ID" value="ENSDARP00000047739"/>
    <property type="gene ID" value="ENSDARG00000029600"/>
</dbReference>
<dbReference type="Ensembl" id="ENSDART00000183067">
    <property type="protein sequence ID" value="ENSDARP00000152086"/>
    <property type="gene ID" value="ENSDARG00000110405"/>
</dbReference>
<dbReference type="GeneID" id="405882"/>
<dbReference type="KEGG" id="dre:405882"/>
<dbReference type="AGR" id="ZFIN:ZDB-GENE-040426-2314"/>
<dbReference type="CTD" id="405882"/>
<dbReference type="ZFIN" id="ZDB-GENE-040426-2314">
    <property type="gene designation" value="wdr32"/>
</dbReference>
<dbReference type="eggNOG" id="KOG0264">
    <property type="taxonomic scope" value="Eukaryota"/>
</dbReference>
<dbReference type="eggNOG" id="KOG4155">
    <property type="taxonomic scope" value="Eukaryota"/>
</dbReference>
<dbReference type="HOGENOM" id="CLU_028919_2_0_1"/>
<dbReference type="InParanoid" id="Q6NWH1"/>
<dbReference type="OMA" id="STAHEDC"/>
<dbReference type="OrthoDB" id="20669at2759"/>
<dbReference type="PhylomeDB" id="Q6NWH1"/>
<dbReference type="TreeFam" id="TF323434"/>
<dbReference type="Reactome" id="R-DRE-8951664">
    <property type="pathway name" value="Neddylation"/>
</dbReference>
<dbReference type="UniPathway" id="UPA00143"/>
<dbReference type="PRO" id="PR:Q6NWH1"/>
<dbReference type="Proteomes" id="UP000000437">
    <property type="component" value="Alternate scaffold 13"/>
</dbReference>
<dbReference type="Proteomes" id="UP000000437">
    <property type="component" value="Chromosome 13"/>
</dbReference>
<dbReference type="Bgee" id="ENSDARG00000029600">
    <property type="expression patterns" value="Expressed in early embryo and 26 other cell types or tissues"/>
</dbReference>
<dbReference type="GO" id="GO:0080008">
    <property type="term" value="C:Cul4-RING E3 ubiquitin ligase complex"/>
    <property type="evidence" value="ECO:0000250"/>
    <property type="project" value="UniProtKB"/>
</dbReference>
<dbReference type="GO" id="GO:0016567">
    <property type="term" value="P:protein ubiquitination"/>
    <property type="evidence" value="ECO:0007669"/>
    <property type="project" value="UniProtKB-UniPathway"/>
</dbReference>
<dbReference type="FunFam" id="2.130.10.10:FF:000116">
    <property type="entry name" value="DDB1- and CUL4-associated factor 10"/>
    <property type="match status" value="1"/>
</dbReference>
<dbReference type="FunFam" id="2.130.10.10:FF:001360">
    <property type="entry name" value="DDB1- and CUL4-associated factor 10"/>
    <property type="match status" value="1"/>
</dbReference>
<dbReference type="Gene3D" id="2.130.10.10">
    <property type="entry name" value="YVTN repeat-like/Quinoprotein amine dehydrogenase"/>
    <property type="match status" value="2"/>
</dbReference>
<dbReference type="InterPro" id="IPR039085">
    <property type="entry name" value="DCA10"/>
</dbReference>
<dbReference type="InterPro" id="IPR015943">
    <property type="entry name" value="WD40/YVTN_repeat-like_dom_sf"/>
</dbReference>
<dbReference type="InterPro" id="IPR036322">
    <property type="entry name" value="WD40_repeat_dom_sf"/>
</dbReference>
<dbReference type="InterPro" id="IPR001680">
    <property type="entry name" value="WD40_rpt"/>
</dbReference>
<dbReference type="PANTHER" id="PTHR14588">
    <property type="entry name" value="DDB1- AND CUL4-ASSOCIATED FACTOR 10"/>
    <property type="match status" value="1"/>
</dbReference>
<dbReference type="PANTHER" id="PTHR14588:SF2">
    <property type="entry name" value="DDB1- AND CUL4-ASSOCIATED FACTOR 10"/>
    <property type="match status" value="1"/>
</dbReference>
<dbReference type="Pfam" id="PF00400">
    <property type="entry name" value="WD40"/>
    <property type="match status" value="3"/>
</dbReference>
<dbReference type="SMART" id="SM00320">
    <property type="entry name" value="WD40"/>
    <property type="match status" value="5"/>
</dbReference>
<dbReference type="SUPFAM" id="SSF50978">
    <property type="entry name" value="WD40 repeat-like"/>
    <property type="match status" value="1"/>
</dbReference>
<dbReference type="PROSITE" id="PS00678">
    <property type="entry name" value="WD_REPEATS_1"/>
    <property type="match status" value="1"/>
</dbReference>
<dbReference type="PROSITE" id="PS50082">
    <property type="entry name" value="WD_REPEATS_2"/>
    <property type="match status" value="2"/>
</dbReference>
<dbReference type="PROSITE" id="PS50294">
    <property type="entry name" value="WD_REPEATS_REGION"/>
    <property type="match status" value="1"/>
</dbReference>
<name>DCA10_DANRE</name>
<reference key="1">
    <citation type="submission" date="2004-03" db="EMBL/GenBank/DDBJ databases">
        <authorList>
            <consortium name="NIH - Zebrafish Gene Collection (ZGC) project"/>
        </authorList>
    </citation>
    <scope>NUCLEOTIDE SEQUENCE [LARGE SCALE MRNA]</scope>
    <source>
        <tissue>Embryo</tissue>
    </source>
</reference>